<organism>
    <name type="scientific">Azotobacter chroococcum mcd 1</name>
    <dbReference type="NCBI Taxonomy" id="355"/>
    <lineage>
        <taxon>Bacteria</taxon>
        <taxon>Pseudomonadati</taxon>
        <taxon>Pseudomonadota</taxon>
        <taxon>Gammaproteobacteria</taxon>
        <taxon>Pseudomonadales</taxon>
        <taxon>Pseudomonadaceae</taxon>
        <taxon>Azotobacter</taxon>
    </lineage>
</organism>
<proteinExistence type="predicted"/>
<name>FDXN_AZOCH</name>
<keyword id="KW-0004">4Fe-4S</keyword>
<keyword id="KW-0249">Electron transport</keyword>
<keyword id="KW-0408">Iron</keyword>
<keyword id="KW-0411">Iron-sulfur</keyword>
<keyword id="KW-0479">Metal-binding</keyword>
<keyword id="KW-0535">Nitrogen fixation</keyword>
<keyword id="KW-0677">Repeat</keyword>
<keyword id="KW-0813">Transport</keyword>
<accession>P06123</accession>
<protein>
    <recommendedName>
        <fullName>Ferredoxin-like protein in vnf region</fullName>
    </recommendedName>
</protein>
<dbReference type="EMBL" id="X51756">
    <property type="protein sequence ID" value="CAA36056.1"/>
    <property type="molecule type" value="Genomic_DNA"/>
</dbReference>
<dbReference type="EMBL" id="X03916">
    <property type="protein sequence ID" value="CAA27554.1"/>
    <property type="molecule type" value="Genomic_DNA"/>
</dbReference>
<dbReference type="PIR" id="B25103">
    <property type="entry name" value="B25103"/>
</dbReference>
<dbReference type="SMR" id="P06123"/>
<dbReference type="GO" id="GO:0051539">
    <property type="term" value="F:4 iron, 4 sulfur cluster binding"/>
    <property type="evidence" value="ECO:0007669"/>
    <property type="project" value="UniProtKB-KW"/>
</dbReference>
<dbReference type="GO" id="GO:0046872">
    <property type="term" value="F:metal ion binding"/>
    <property type="evidence" value="ECO:0007669"/>
    <property type="project" value="UniProtKB-KW"/>
</dbReference>
<dbReference type="GO" id="GO:0009399">
    <property type="term" value="P:nitrogen fixation"/>
    <property type="evidence" value="ECO:0007669"/>
    <property type="project" value="UniProtKB-KW"/>
</dbReference>
<dbReference type="Gene3D" id="3.30.70.20">
    <property type="match status" value="1"/>
</dbReference>
<dbReference type="InterPro" id="IPR017896">
    <property type="entry name" value="4Fe4S_Fe-S-bd"/>
</dbReference>
<dbReference type="InterPro" id="IPR017900">
    <property type="entry name" value="4Fe4S_Fe_S_CS"/>
</dbReference>
<dbReference type="Pfam" id="PF12838">
    <property type="entry name" value="Fer4_7"/>
    <property type="match status" value="1"/>
</dbReference>
<dbReference type="SUPFAM" id="SSF54862">
    <property type="entry name" value="4Fe-4S ferredoxins"/>
    <property type="match status" value="1"/>
</dbReference>
<dbReference type="PROSITE" id="PS00198">
    <property type="entry name" value="4FE4S_FER_1"/>
    <property type="match status" value="1"/>
</dbReference>
<dbReference type="PROSITE" id="PS51379">
    <property type="entry name" value="4FE4S_FER_2"/>
    <property type="match status" value="2"/>
</dbReference>
<sequence>MAMAIDGYECTVCGDCKPVCPTGSIVLQGGIYVIDADSCNECADLGEPRCLGVCPVDFCIQPLDD</sequence>
<evidence type="ECO:0000250" key="1"/>
<evidence type="ECO:0000255" key="2">
    <source>
        <dbReference type="PROSITE-ProRule" id="PRU00711"/>
    </source>
</evidence>
<evidence type="ECO:0000305" key="3"/>
<reference key="1">
    <citation type="journal article" date="1990" name="Nucleic Acids Res.">
        <title>Completed sequence of the region encoding the structural genes for the vanadium nitrogenase of Azotobacter chroococcum.</title>
        <authorList>
            <person name="Fallik E."/>
            <person name="Robson R.L."/>
        </authorList>
    </citation>
    <scope>NUCLEOTIDE SEQUENCE [GENOMIC DNA]</scope>
</reference>
<reference key="2">
    <citation type="journal article" date="1986" name="EMBO J.">
        <title>Second gene (nifH*) coding for a nitrogenase iron protein in Azotobacter chroococcum is adjacent to a gene coding for a ferredoxin-like protein.</title>
        <authorList>
            <person name="Robson R.L."/>
            <person name="Woodley P."/>
            <person name="Jones R."/>
        </authorList>
    </citation>
    <scope>NUCLEOTIDE SEQUENCE [GENOMIC DNA]</scope>
</reference>
<feature type="chain" id="PRO_0000159164" description="Ferredoxin-like protein in vnf region">
    <location>
        <begin position="1"/>
        <end position="65"/>
    </location>
</feature>
<feature type="domain" description="4Fe-4S ferredoxin-type 1" evidence="2">
    <location>
        <begin position="2"/>
        <end position="29"/>
    </location>
</feature>
<feature type="domain" description="4Fe-4S ferredoxin-type 2" evidence="2">
    <location>
        <begin position="30"/>
        <end position="65"/>
    </location>
</feature>
<feature type="binding site" evidence="1">
    <location>
        <position position="10"/>
    </location>
    <ligand>
        <name>[4Fe-4S] cluster</name>
        <dbReference type="ChEBI" id="CHEBI:49883"/>
        <label>1</label>
    </ligand>
</feature>
<feature type="binding site" evidence="1">
    <location>
        <position position="13"/>
    </location>
    <ligand>
        <name>[4Fe-4S] cluster</name>
        <dbReference type="ChEBI" id="CHEBI:49883"/>
        <label>1</label>
    </ligand>
</feature>
<feature type="binding site" evidence="1">
    <location>
        <position position="16"/>
    </location>
    <ligand>
        <name>[4Fe-4S] cluster</name>
        <dbReference type="ChEBI" id="CHEBI:49883"/>
        <label>1</label>
    </ligand>
</feature>
<feature type="binding site" evidence="1">
    <location>
        <position position="20"/>
    </location>
    <ligand>
        <name>[4Fe-4S] cluster</name>
        <dbReference type="ChEBI" id="CHEBI:49883"/>
        <label>2</label>
    </ligand>
</feature>
<feature type="binding site" evidence="1">
    <location>
        <position position="39"/>
    </location>
    <ligand>
        <name>[4Fe-4S] cluster</name>
        <dbReference type="ChEBI" id="CHEBI:49883"/>
        <label>2</label>
    </ligand>
</feature>
<feature type="binding site" evidence="1">
    <location>
        <position position="42"/>
    </location>
    <ligand>
        <name>[4Fe-4S] cluster</name>
        <dbReference type="ChEBI" id="CHEBI:49883"/>
        <label>2</label>
    </ligand>
</feature>
<feature type="binding site" evidence="1">
    <location>
        <position position="50"/>
    </location>
    <ligand>
        <name>[4Fe-4S] cluster</name>
        <dbReference type="ChEBI" id="CHEBI:49883"/>
        <label>2</label>
    </ligand>
</feature>
<feature type="binding site" evidence="1">
    <location>
        <position position="54"/>
    </location>
    <ligand>
        <name>[4Fe-4S] cluster</name>
        <dbReference type="ChEBI" id="CHEBI:49883"/>
        <label>1</label>
    </ligand>
</feature>
<comment type="cofactor">
    <cofactor evidence="3">
        <name>[4Fe-4S] cluster</name>
        <dbReference type="ChEBI" id="CHEBI:49883"/>
    </cofactor>
    <text evidence="3">Binds 2 [4Fe-4S] clusters.</text>
</comment>